<feature type="initiator methionine" description="Removed" evidence="2">
    <location>
        <position position="1"/>
    </location>
</feature>
<feature type="chain" id="PRO_0000215778" description="HIG1 domain family member 2A">
    <location>
        <begin position="2"/>
        <end position="106"/>
    </location>
</feature>
<feature type="transmembrane region" description="Helical" evidence="3">
    <location>
        <begin position="47"/>
        <end position="67"/>
    </location>
</feature>
<feature type="transmembrane region" description="Helical" evidence="3">
    <location>
        <begin position="83"/>
        <end position="103"/>
    </location>
</feature>
<feature type="domain" description="HIG1" evidence="3">
    <location>
        <begin position="20"/>
        <end position="106"/>
    </location>
</feature>
<feature type="modified residue" description="N-acetylalanine" evidence="2">
    <location>
        <position position="2"/>
    </location>
</feature>
<dbReference type="EMBL" id="AK005269">
    <property type="protein sequence ID" value="BAB23921.1"/>
    <property type="molecule type" value="mRNA"/>
</dbReference>
<dbReference type="EMBL" id="AK008387">
    <property type="protein sequence ID" value="BAB25641.1"/>
    <property type="molecule type" value="mRNA"/>
</dbReference>
<dbReference type="EMBL" id="BC021471">
    <property type="protein sequence ID" value="AAH21471.1"/>
    <property type="molecule type" value="mRNA"/>
</dbReference>
<dbReference type="CCDS" id="CCDS26532.1"/>
<dbReference type="RefSeq" id="NP_080209.1">
    <property type="nucleotide sequence ID" value="NM_025933.3"/>
</dbReference>
<dbReference type="FunCoup" id="Q9CQJ1">
    <property type="interactions" value="886"/>
</dbReference>
<dbReference type="STRING" id="10090.ENSMUSP00000026986"/>
<dbReference type="PhosphoSitePlus" id="Q9CQJ1"/>
<dbReference type="jPOST" id="Q9CQJ1"/>
<dbReference type="PaxDb" id="10090-ENSMUSP00000026986"/>
<dbReference type="PeptideAtlas" id="Q9CQJ1"/>
<dbReference type="ProteomicsDB" id="273108"/>
<dbReference type="Pumba" id="Q9CQJ1"/>
<dbReference type="DNASU" id="67044"/>
<dbReference type="Ensembl" id="ENSMUST00000026986.7">
    <property type="protein sequence ID" value="ENSMUSP00000026986.7"/>
    <property type="gene ID" value="ENSMUSG00000025868.7"/>
</dbReference>
<dbReference type="GeneID" id="67044"/>
<dbReference type="KEGG" id="mmu:67044"/>
<dbReference type="UCSC" id="uc007qol.1">
    <property type="organism name" value="mouse"/>
</dbReference>
<dbReference type="AGR" id="MGI:1914294"/>
<dbReference type="CTD" id="192286"/>
<dbReference type="MGI" id="MGI:1914294">
    <property type="gene designation" value="Higd2a"/>
</dbReference>
<dbReference type="VEuPathDB" id="HostDB:ENSMUSG00000025868"/>
<dbReference type="eggNOG" id="KOG4431">
    <property type="taxonomic scope" value="Eukaryota"/>
</dbReference>
<dbReference type="GeneTree" id="ENSGT00910000144291"/>
<dbReference type="HOGENOM" id="CLU_087356_4_0_1"/>
<dbReference type="InParanoid" id="Q9CQJ1"/>
<dbReference type="OMA" id="FHRGHSQ"/>
<dbReference type="OrthoDB" id="6604018at2759"/>
<dbReference type="PhylomeDB" id="Q9CQJ1"/>
<dbReference type="TreeFam" id="TF314628"/>
<dbReference type="Reactome" id="R-MMU-9864848">
    <property type="pathway name" value="Complex IV assembly"/>
</dbReference>
<dbReference type="BioGRID-ORCS" id="67044">
    <property type="hits" value="9 hits in 76 CRISPR screens"/>
</dbReference>
<dbReference type="ChiTaRS" id="Higd2a">
    <property type="organism name" value="mouse"/>
</dbReference>
<dbReference type="PRO" id="PR:Q9CQJ1"/>
<dbReference type="Proteomes" id="UP000000589">
    <property type="component" value="Chromosome 13"/>
</dbReference>
<dbReference type="RNAct" id="Q9CQJ1">
    <property type="molecule type" value="protein"/>
</dbReference>
<dbReference type="Bgee" id="ENSMUSG00000025868">
    <property type="expression patterns" value="Expressed in facial nucleus and 264 other cell types or tissues"/>
</dbReference>
<dbReference type="GO" id="GO:0005743">
    <property type="term" value="C:mitochondrial inner membrane"/>
    <property type="evidence" value="ECO:0007669"/>
    <property type="project" value="UniProtKB-SubCell"/>
</dbReference>
<dbReference type="GO" id="GO:0005739">
    <property type="term" value="C:mitochondrion"/>
    <property type="evidence" value="ECO:0000314"/>
    <property type="project" value="MGI"/>
</dbReference>
<dbReference type="GO" id="GO:0005634">
    <property type="term" value="C:nucleus"/>
    <property type="evidence" value="ECO:0000314"/>
    <property type="project" value="MGI"/>
</dbReference>
<dbReference type="GO" id="GO:0097250">
    <property type="term" value="P:mitochondrial respirasome assembly"/>
    <property type="evidence" value="ECO:0000315"/>
    <property type="project" value="MGI"/>
</dbReference>
<dbReference type="GO" id="GO:0043066">
    <property type="term" value="P:negative regulation of apoptotic process"/>
    <property type="evidence" value="ECO:0000266"/>
    <property type="project" value="MGI"/>
</dbReference>
<dbReference type="GO" id="GO:1905235">
    <property type="term" value="P:response to quercetin"/>
    <property type="evidence" value="ECO:0000314"/>
    <property type="project" value="MGI"/>
</dbReference>
<dbReference type="Gene3D" id="6.10.140.1320">
    <property type="match status" value="1"/>
</dbReference>
<dbReference type="InterPro" id="IPR007667">
    <property type="entry name" value="Hypoxia_induced_domain"/>
</dbReference>
<dbReference type="InterPro" id="IPR050355">
    <property type="entry name" value="RCF1"/>
</dbReference>
<dbReference type="PANTHER" id="PTHR12297:SF18">
    <property type="entry name" value="HIG1 DOMAIN FAMILY MEMBER 2A"/>
    <property type="match status" value="1"/>
</dbReference>
<dbReference type="PANTHER" id="PTHR12297">
    <property type="entry name" value="HYPOXIA-INDUCBILE GENE 1 HIG1 -RELATED"/>
    <property type="match status" value="1"/>
</dbReference>
<dbReference type="Pfam" id="PF04588">
    <property type="entry name" value="HIG_1_N"/>
    <property type="match status" value="1"/>
</dbReference>
<dbReference type="PROSITE" id="PS51503">
    <property type="entry name" value="HIG1"/>
    <property type="match status" value="1"/>
</dbReference>
<gene>
    <name type="primary">Higd2a</name>
</gene>
<sequence>MAAPGPVSPEAPFDPSKPPVIEGFSPTVYSNPEGFKEKFIRKTRENPMVPIGCLGTAAALTYGLYCFHRGQSHRSQLMMRTRIAAQGFTVVAILLGLAASAMKSQA</sequence>
<comment type="function">
    <text evidence="1">Proposed subunit of cytochrome c oxidase (COX, complex IV), which is the terminal component of the mitochondrial respiratory chain that catalyzes the reduction of oxygen to water. May be involved in cytochrome c oxidase activity. May play a role in the assembly of respiratory supercomplexes (By similarity).</text>
</comment>
<comment type="subunit">
    <text evidence="1">Associates with cytochrome c oxidase (COX, complex IV); proposed complex component.</text>
</comment>
<comment type="subcellular location">
    <subcellularLocation>
        <location evidence="3">Mitochondrion membrane</location>
        <topology evidence="3">Multi-pass membrane protein</topology>
    </subcellularLocation>
    <subcellularLocation>
        <location evidence="1">Mitochondrion inner membrane</location>
    </subcellularLocation>
</comment>
<proteinExistence type="inferred from homology"/>
<name>HIG2A_MOUSE</name>
<organism>
    <name type="scientific">Mus musculus</name>
    <name type="common">Mouse</name>
    <dbReference type="NCBI Taxonomy" id="10090"/>
    <lineage>
        <taxon>Eukaryota</taxon>
        <taxon>Metazoa</taxon>
        <taxon>Chordata</taxon>
        <taxon>Craniata</taxon>
        <taxon>Vertebrata</taxon>
        <taxon>Euteleostomi</taxon>
        <taxon>Mammalia</taxon>
        <taxon>Eutheria</taxon>
        <taxon>Euarchontoglires</taxon>
        <taxon>Glires</taxon>
        <taxon>Rodentia</taxon>
        <taxon>Myomorpha</taxon>
        <taxon>Muroidea</taxon>
        <taxon>Muridae</taxon>
        <taxon>Murinae</taxon>
        <taxon>Mus</taxon>
        <taxon>Mus</taxon>
    </lineage>
</organism>
<reference key="1">
    <citation type="journal article" date="2005" name="Science">
        <title>The transcriptional landscape of the mammalian genome.</title>
        <authorList>
            <person name="Carninci P."/>
            <person name="Kasukawa T."/>
            <person name="Katayama S."/>
            <person name="Gough J."/>
            <person name="Frith M.C."/>
            <person name="Maeda N."/>
            <person name="Oyama R."/>
            <person name="Ravasi T."/>
            <person name="Lenhard B."/>
            <person name="Wells C."/>
            <person name="Kodzius R."/>
            <person name="Shimokawa K."/>
            <person name="Bajic V.B."/>
            <person name="Brenner S.E."/>
            <person name="Batalov S."/>
            <person name="Forrest A.R."/>
            <person name="Zavolan M."/>
            <person name="Davis M.J."/>
            <person name="Wilming L.G."/>
            <person name="Aidinis V."/>
            <person name="Allen J.E."/>
            <person name="Ambesi-Impiombato A."/>
            <person name="Apweiler R."/>
            <person name="Aturaliya R.N."/>
            <person name="Bailey T.L."/>
            <person name="Bansal M."/>
            <person name="Baxter L."/>
            <person name="Beisel K.W."/>
            <person name="Bersano T."/>
            <person name="Bono H."/>
            <person name="Chalk A.M."/>
            <person name="Chiu K.P."/>
            <person name="Choudhary V."/>
            <person name="Christoffels A."/>
            <person name="Clutterbuck D.R."/>
            <person name="Crowe M.L."/>
            <person name="Dalla E."/>
            <person name="Dalrymple B.P."/>
            <person name="de Bono B."/>
            <person name="Della Gatta G."/>
            <person name="di Bernardo D."/>
            <person name="Down T."/>
            <person name="Engstrom P."/>
            <person name="Fagiolini M."/>
            <person name="Faulkner G."/>
            <person name="Fletcher C.F."/>
            <person name="Fukushima T."/>
            <person name="Furuno M."/>
            <person name="Futaki S."/>
            <person name="Gariboldi M."/>
            <person name="Georgii-Hemming P."/>
            <person name="Gingeras T.R."/>
            <person name="Gojobori T."/>
            <person name="Green R.E."/>
            <person name="Gustincich S."/>
            <person name="Harbers M."/>
            <person name="Hayashi Y."/>
            <person name="Hensch T.K."/>
            <person name="Hirokawa N."/>
            <person name="Hill D."/>
            <person name="Huminiecki L."/>
            <person name="Iacono M."/>
            <person name="Ikeo K."/>
            <person name="Iwama A."/>
            <person name="Ishikawa T."/>
            <person name="Jakt M."/>
            <person name="Kanapin A."/>
            <person name="Katoh M."/>
            <person name="Kawasawa Y."/>
            <person name="Kelso J."/>
            <person name="Kitamura H."/>
            <person name="Kitano H."/>
            <person name="Kollias G."/>
            <person name="Krishnan S.P."/>
            <person name="Kruger A."/>
            <person name="Kummerfeld S.K."/>
            <person name="Kurochkin I.V."/>
            <person name="Lareau L.F."/>
            <person name="Lazarevic D."/>
            <person name="Lipovich L."/>
            <person name="Liu J."/>
            <person name="Liuni S."/>
            <person name="McWilliam S."/>
            <person name="Madan Babu M."/>
            <person name="Madera M."/>
            <person name="Marchionni L."/>
            <person name="Matsuda H."/>
            <person name="Matsuzawa S."/>
            <person name="Miki H."/>
            <person name="Mignone F."/>
            <person name="Miyake S."/>
            <person name="Morris K."/>
            <person name="Mottagui-Tabar S."/>
            <person name="Mulder N."/>
            <person name="Nakano N."/>
            <person name="Nakauchi H."/>
            <person name="Ng P."/>
            <person name="Nilsson R."/>
            <person name="Nishiguchi S."/>
            <person name="Nishikawa S."/>
            <person name="Nori F."/>
            <person name="Ohara O."/>
            <person name="Okazaki Y."/>
            <person name="Orlando V."/>
            <person name="Pang K.C."/>
            <person name="Pavan W.J."/>
            <person name="Pavesi G."/>
            <person name="Pesole G."/>
            <person name="Petrovsky N."/>
            <person name="Piazza S."/>
            <person name="Reed J."/>
            <person name="Reid J.F."/>
            <person name="Ring B.Z."/>
            <person name="Ringwald M."/>
            <person name="Rost B."/>
            <person name="Ruan Y."/>
            <person name="Salzberg S.L."/>
            <person name="Sandelin A."/>
            <person name="Schneider C."/>
            <person name="Schoenbach C."/>
            <person name="Sekiguchi K."/>
            <person name="Semple C.A."/>
            <person name="Seno S."/>
            <person name="Sessa L."/>
            <person name="Sheng Y."/>
            <person name="Shibata Y."/>
            <person name="Shimada H."/>
            <person name="Shimada K."/>
            <person name="Silva D."/>
            <person name="Sinclair B."/>
            <person name="Sperling S."/>
            <person name="Stupka E."/>
            <person name="Sugiura K."/>
            <person name="Sultana R."/>
            <person name="Takenaka Y."/>
            <person name="Taki K."/>
            <person name="Tammoja K."/>
            <person name="Tan S.L."/>
            <person name="Tang S."/>
            <person name="Taylor M.S."/>
            <person name="Tegner J."/>
            <person name="Teichmann S.A."/>
            <person name="Ueda H.R."/>
            <person name="van Nimwegen E."/>
            <person name="Verardo R."/>
            <person name="Wei C.L."/>
            <person name="Yagi K."/>
            <person name="Yamanishi H."/>
            <person name="Zabarovsky E."/>
            <person name="Zhu S."/>
            <person name="Zimmer A."/>
            <person name="Hide W."/>
            <person name="Bult C."/>
            <person name="Grimmond S.M."/>
            <person name="Teasdale R.D."/>
            <person name="Liu E.T."/>
            <person name="Brusic V."/>
            <person name="Quackenbush J."/>
            <person name="Wahlestedt C."/>
            <person name="Mattick J.S."/>
            <person name="Hume D.A."/>
            <person name="Kai C."/>
            <person name="Sasaki D."/>
            <person name="Tomaru Y."/>
            <person name="Fukuda S."/>
            <person name="Kanamori-Katayama M."/>
            <person name="Suzuki M."/>
            <person name="Aoki J."/>
            <person name="Arakawa T."/>
            <person name="Iida J."/>
            <person name="Imamura K."/>
            <person name="Itoh M."/>
            <person name="Kato T."/>
            <person name="Kawaji H."/>
            <person name="Kawagashira N."/>
            <person name="Kawashima T."/>
            <person name="Kojima M."/>
            <person name="Kondo S."/>
            <person name="Konno H."/>
            <person name="Nakano K."/>
            <person name="Ninomiya N."/>
            <person name="Nishio T."/>
            <person name="Okada M."/>
            <person name="Plessy C."/>
            <person name="Shibata K."/>
            <person name="Shiraki T."/>
            <person name="Suzuki S."/>
            <person name="Tagami M."/>
            <person name="Waki K."/>
            <person name="Watahiki A."/>
            <person name="Okamura-Oho Y."/>
            <person name="Suzuki H."/>
            <person name="Kawai J."/>
            <person name="Hayashizaki Y."/>
        </authorList>
    </citation>
    <scope>NUCLEOTIDE SEQUENCE [LARGE SCALE MRNA]</scope>
    <source>
        <strain>C57BL/6J</strain>
        <tissue>Cerebellum</tissue>
        <tissue>Small intestine</tissue>
    </source>
</reference>
<reference key="2">
    <citation type="journal article" date="2004" name="Genome Res.">
        <title>The status, quality, and expansion of the NIH full-length cDNA project: the Mammalian Gene Collection (MGC).</title>
        <authorList>
            <consortium name="The MGC Project Team"/>
        </authorList>
    </citation>
    <scope>NUCLEOTIDE SEQUENCE [LARGE SCALE MRNA]</scope>
    <source>
        <strain>FVB/N</strain>
        <tissue>Mammary tumor</tissue>
    </source>
</reference>
<keyword id="KW-0007">Acetylation</keyword>
<keyword id="KW-0249">Electron transport</keyword>
<keyword id="KW-0472">Membrane</keyword>
<keyword id="KW-0496">Mitochondrion</keyword>
<keyword id="KW-0999">Mitochondrion inner membrane</keyword>
<keyword id="KW-1185">Reference proteome</keyword>
<keyword id="KW-0812">Transmembrane</keyword>
<keyword id="KW-1133">Transmembrane helix</keyword>
<keyword id="KW-0813">Transport</keyword>
<evidence type="ECO:0000250" key="1"/>
<evidence type="ECO:0000250" key="2">
    <source>
        <dbReference type="UniProtKB" id="Q9BW72"/>
    </source>
</evidence>
<evidence type="ECO:0000255" key="3">
    <source>
        <dbReference type="PROSITE-ProRule" id="PRU00836"/>
    </source>
</evidence>
<accession>Q9CQJ1</accession>
<protein>
    <recommendedName>
        <fullName>HIG1 domain family member 2A</fullName>
    </recommendedName>
</protein>